<evidence type="ECO:0000255" key="1">
    <source>
        <dbReference type="HAMAP-Rule" id="MF_00632"/>
    </source>
</evidence>
<proteinExistence type="inferred from homology"/>
<dbReference type="EMBL" id="CP000878">
    <property type="protein sequence ID" value="ABX08412.1"/>
    <property type="molecule type" value="Genomic_DNA"/>
</dbReference>
<dbReference type="RefSeq" id="WP_012195035.1">
    <property type="nucleotide sequence ID" value="NC_009976.1"/>
</dbReference>
<dbReference type="SMR" id="A9BEA2"/>
<dbReference type="STRING" id="93059.P9211_04811"/>
<dbReference type="KEGG" id="pmj:P9211_04811"/>
<dbReference type="eggNOG" id="COG1666">
    <property type="taxonomic scope" value="Bacteria"/>
</dbReference>
<dbReference type="HOGENOM" id="CLU_099839_0_0_3"/>
<dbReference type="OrthoDB" id="9801447at2"/>
<dbReference type="Proteomes" id="UP000000788">
    <property type="component" value="Chromosome"/>
</dbReference>
<dbReference type="GO" id="GO:0005829">
    <property type="term" value="C:cytosol"/>
    <property type="evidence" value="ECO:0007669"/>
    <property type="project" value="TreeGrafter"/>
</dbReference>
<dbReference type="GO" id="GO:0000166">
    <property type="term" value="F:nucleotide binding"/>
    <property type="evidence" value="ECO:0007669"/>
    <property type="project" value="TreeGrafter"/>
</dbReference>
<dbReference type="CDD" id="cd11740">
    <property type="entry name" value="YajQ_like"/>
    <property type="match status" value="1"/>
</dbReference>
<dbReference type="Gene3D" id="3.30.70.860">
    <property type="match status" value="1"/>
</dbReference>
<dbReference type="Gene3D" id="3.30.70.990">
    <property type="entry name" value="YajQ-like, domain 2"/>
    <property type="match status" value="1"/>
</dbReference>
<dbReference type="HAMAP" id="MF_00632">
    <property type="entry name" value="YajQ"/>
    <property type="match status" value="1"/>
</dbReference>
<dbReference type="InterPro" id="IPR007551">
    <property type="entry name" value="DUF520"/>
</dbReference>
<dbReference type="InterPro" id="IPR035571">
    <property type="entry name" value="UPF0234-like_C"/>
</dbReference>
<dbReference type="InterPro" id="IPR035570">
    <property type="entry name" value="UPF0234_N"/>
</dbReference>
<dbReference type="InterPro" id="IPR036183">
    <property type="entry name" value="YajQ-like_sf"/>
</dbReference>
<dbReference type="NCBIfam" id="NF003819">
    <property type="entry name" value="PRK05412.1"/>
    <property type="match status" value="1"/>
</dbReference>
<dbReference type="PANTHER" id="PTHR30476">
    <property type="entry name" value="UPF0234 PROTEIN YAJQ"/>
    <property type="match status" value="1"/>
</dbReference>
<dbReference type="PANTHER" id="PTHR30476:SF0">
    <property type="entry name" value="UPF0234 PROTEIN YAJQ"/>
    <property type="match status" value="1"/>
</dbReference>
<dbReference type="Pfam" id="PF04461">
    <property type="entry name" value="DUF520"/>
    <property type="match status" value="1"/>
</dbReference>
<dbReference type="SUPFAM" id="SSF89963">
    <property type="entry name" value="YajQ-like"/>
    <property type="match status" value="2"/>
</dbReference>
<comment type="function">
    <text evidence="1">Nucleotide-binding protein.</text>
</comment>
<comment type="similarity">
    <text evidence="1">Belongs to the YajQ family.</text>
</comment>
<accession>A9BEA2</accession>
<organism>
    <name type="scientific">Prochlorococcus marinus (strain MIT 9211)</name>
    <dbReference type="NCBI Taxonomy" id="93059"/>
    <lineage>
        <taxon>Bacteria</taxon>
        <taxon>Bacillati</taxon>
        <taxon>Cyanobacteriota</taxon>
        <taxon>Cyanophyceae</taxon>
        <taxon>Synechococcales</taxon>
        <taxon>Prochlorococcaceae</taxon>
        <taxon>Prochlorococcus</taxon>
    </lineage>
</organism>
<sequence length="165" mass="18929">MASTYSFDVVSDFDHQELVNAIDQLKREISQRYDLKESNSEVELEEEKIIITTSSDMTLQAIEGVLLQKATKRKLSLKIFDFQPSETSSGNRVRQIVNLRKGLSQDMAKKLSKAVRDQLKKVTVSIQGDSLRVTGKSKDDLQSAIEIFRKKEEELDIPLQFENYR</sequence>
<keyword id="KW-0547">Nucleotide-binding</keyword>
<keyword id="KW-1185">Reference proteome</keyword>
<name>Y481_PROM4</name>
<reference key="1">
    <citation type="journal article" date="2007" name="PLoS Genet.">
        <title>Patterns and implications of gene gain and loss in the evolution of Prochlorococcus.</title>
        <authorList>
            <person name="Kettler G.C."/>
            <person name="Martiny A.C."/>
            <person name="Huang K."/>
            <person name="Zucker J."/>
            <person name="Coleman M.L."/>
            <person name="Rodrigue S."/>
            <person name="Chen F."/>
            <person name="Lapidus A."/>
            <person name="Ferriera S."/>
            <person name="Johnson J."/>
            <person name="Steglich C."/>
            <person name="Church G.M."/>
            <person name="Richardson P."/>
            <person name="Chisholm S.W."/>
        </authorList>
    </citation>
    <scope>NUCLEOTIDE SEQUENCE [LARGE SCALE GENOMIC DNA]</scope>
    <source>
        <strain>MIT 9211</strain>
    </source>
</reference>
<protein>
    <recommendedName>
        <fullName evidence="1">Nucleotide-binding protein P9211_04811</fullName>
    </recommendedName>
</protein>
<gene>
    <name type="ordered locus">P9211_04811</name>
</gene>
<feature type="chain" id="PRO_1000147314" description="Nucleotide-binding protein P9211_04811">
    <location>
        <begin position="1"/>
        <end position="165"/>
    </location>
</feature>